<dbReference type="EMBL" id="CP000792">
    <property type="protein sequence ID" value="EAT98178.1"/>
    <property type="molecule type" value="Genomic_DNA"/>
</dbReference>
<dbReference type="RefSeq" id="WP_002942540.1">
    <property type="nucleotide sequence ID" value="NC_009802.2"/>
</dbReference>
<dbReference type="SMR" id="A7ZC03"/>
<dbReference type="STRING" id="360104.CCC13826_0988"/>
<dbReference type="GeneID" id="61002824"/>
<dbReference type="KEGG" id="cco:CCC13826_0988"/>
<dbReference type="eggNOG" id="COG0333">
    <property type="taxonomic scope" value="Bacteria"/>
</dbReference>
<dbReference type="HOGENOM" id="CLU_129084_1_2_7"/>
<dbReference type="OrthoDB" id="9801927at2"/>
<dbReference type="Proteomes" id="UP000001121">
    <property type="component" value="Chromosome"/>
</dbReference>
<dbReference type="GO" id="GO:0015934">
    <property type="term" value="C:large ribosomal subunit"/>
    <property type="evidence" value="ECO:0007669"/>
    <property type="project" value="InterPro"/>
</dbReference>
<dbReference type="GO" id="GO:0003735">
    <property type="term" value="F:structural constituent of ribosome"/>
    <property type="evidence" value="ECO:0007669"/>
    <property type="project" value="InterPro"/>
</dbReference>
<dbReference type="GO" id="GO:0006412">
    <property type="term" value="P:translation"/>
    <property type="evidence" value="ECO:0007669"/>
    <property type="project" value="UniProtKB-UniRule"/>
</dbReference>
<dbReference type="HAMAP" id="MF_00340">
    <property type="entry name" value="Ribosomal_bL32"/>
    <property type="match status" value="1"/>
</dbReference>
<dbReference type="InterPro" id="IPR002677">
    <property type="entry name" value="Ribosomal_bL32"/>
</dbReference>
<dbReference type="InterPro" id="IPR044957">
    <property type="entry name" value="Ribosomal_bL32_bact"/>
</dbReference>
<dbReference type="InterPro" id="IPR011332">
    <property type="entry name" value="Ribosomal_zn-bd"/>
</dbReference>
<dbReference type="NCBIfam" id="TIGR01031">
    <property type="entry name" value="rpmF_bact"/>
    <property type="match status" value="1"/>
</dbReference>
<dbReference type="PANTHER" id="PTHR35534">
    <property type="entry name" value="50S RIBOSOMAL PROTEIN L32"/>
    <property type="match status" value="1"/>
</dbReference>
<dbReference type="PANTHER" id="PTHR35534:SF1">
    <property type="entry name" value="LARGE RIBOSOMAL SUBUNIT PROTEIN BL32"/>
    <property type="match status" value="1"/>
</dbReference>
<dbReference type="Pfam" id="PF01783">
    <property type="entry name" value="Ribosomal_L32p"/>
    <property type="match status" value="1"/>
</dbReference>
<dbReference type="SUPFAM" id="SSF57829">
    <property type="entry name" value="Zn-binding ribosomal proteins"/>
    <property type="match status" value="1"/>
</dbReference>
<proteinExistence type="inferred from homology"/>
<feature type="chain" id="PRO_1000005053" description="Large ribosomal subunit protein bL32">
    <location>
        <begin position="1"/>
        <end position="48"/>
    </location>
</feature>
<feature type="region of interest" description="Disordered" evidence="2">
    <location>
        <begin position="28"/>
        <end position="48"/>
    </location>
</feature>
<organism>
    <name type="scientific">Campylobacter concisus (strain 13826)</name>
    <dbReference type="NCBI Taxonomy" id="360104"/>
    <lineage>
        <taxon>Bacteria</taxon>
        <taxon>Pseudomonadati</taxon>
        <taxon>Campylobacterota</taxon>
        <taxon>Epsilonproteobacteria</taxon>
        <taxon>Campylobacterales</taxon>
        <taxon>Campylobacteraceae</taxon>
        <taxon>Campylobacter</taxon>
    </lineage>
</organism>
<accession>A7ZC03</accession>
<protein>
    <recommendedName>
        <fullName evidence="1">Large ribosomal subunit protein bL32</fullName>
    </recommendedName>
    <alternativeName>
        <fullName evidence="3">50S ribosomal protein L32</fullName>
    </alternativeName>
</protein>
<name>RL32_CAMC1</name>
<reference key="1">
    <citation type="submission" date="2007-10" db="EMBL/GenBank/DDBJ databases">
        <title>Genome sequence of Campylobacter concisus 13826 isolated from human feces.</title>
        <authorList>
            <person name="Fouts D.E."/>
            <person name="Mongodin E.F."/>
            <person name="Puiu D."/>
            <person name="Sebastian Y."/>
            <person name="Miller W.G."/>
            <person name="Mandrell R.E."/>
            <person name="On S."/>
            <person name="Nelson K.E."/>
        </authorList>
    </citation>
    <scope>NUCLEOTIDE SEQUENCE [LARGE SCALE GENOMIC DNA]</scope>
    <source>
        <strain>13826</strain>
    </source>
</reference>
<sequence>MAVPKRRVSHSRAAKRRTHYKVTLPVPVKDKDGSWKMPHRINKTTGEY</sequence>
<gene>
    <name evidence="1" type="primary">rpmF</name>
    <name type="ordered locus">Ccon26_04080</name>
    <name type="ORF">CCC13826_0988</name>
</gene>
<evidence type="ECO:0000255" key="1">
    <source>
        <dbReference type="HAMAP-Rule" id="MF_00340"/>
    </source>
</evidence>
<evidence type="ECO:0000256" key="2">
    <source>
        <dbReference type="SAM" id="MobiDB-lite"/>
    </source>
</evidence>
<evidence type="ECO:0000305" key="3"/>
<keyword id="KW-0687">Ribonucleoprotein</keyword>
<keyword id="KW-0689">Ribosomal protein</keyword>
<comment type="similarity">
    <text evidence="1">Belongs to the bacterial ribosomal protein bL32 family.</text>
</comment>